<gene>
    <name type="ordered locus">MJ1641</name>
</gene>
<proteinExistence type="predicted"/>
<sequence length="287" mass="33433">MNLWDNMLRGKEATLAGIIRVIIEEEPETQDEIAEKLGISRRYVAKLLKPLIDEKIVRHPYIVDMSKLHKINLEFDEYILMKEIKTTLEKMEKTLLNNLDLVYTALKNSDKKLAEDIIIKDYALNKMEEEVRILLSMNALKYLPGAYANALATIASNLERLGDYIANIAEEVVHGLKLDKDIENEVNMIFTLLKEMLTEAIDVVKSKKKETKIHELEEKLHKNLELLLNKVLENKREDLNFYVQFGMFLKDIERFGDRCVNIVDIALELYHNIPRNPIPERLKRGML</sequence>
<protein>
    <recommendedName>
        <fullName>Uncharacterized protein MJ1641</fullName>
    </recommendedName>
</protein>
<feature type="chain" id="PRO_0000107454" description="Uncharacterized protein MJ1641">
    <location>
        <begin position="1"/>
        <end position="287"/>
    </location>
</feature>
<name>Y1641_METJA</name>
<accession>Q59035</accession>
<organism>
    <name type="scientific">Methanocaldococcus jannaschii (strain ATCC 43067 / DSM 2661 / JAL-1 / JCM 10045 / NBRC 100440)</name>
    <name type="common">Methanococcus jannaschii</name>
    <dbReference type="NCBI Taxonomy" id="243232"/>
    <lineage>
        <taxon>Archaea</taxon>
        <taxon>Methanobacteriati</taxon>
        <taxon>Methanobacteriota</taxon>
        <taxon>Methanomada group</taxon>
        <taxon>Methanococci</taxon>
        <taxon>Methanococcales</taxon>
        <taxon>Methanocaldococcaceae</taxon>
        <taxon>Methanocaldococcus</taxon>
    </lineage>
</organism>
<dbReference type="EMBL" id="L77117">
    <property type="protein sequence ID" value="AAB99661.1"/>
    <property type="molecule type" value="Genomic_DNA"/>
</dbReference>
<dbReference type="PIR" id="G64504">
    <property type="entry name" value="G64504"/>
</dbReference>
<dbReference type="SMR" id="Q59035"/>
<dbReference type="STRING" id="243232.MJ_1641"/>
<dbReference type="PaxDb" id="243232-MJ_1641"/>
<dbReference type="EnsemblBacteria" id="AAB99661">
    <property type="protein sequence ID" value="AAB99661"/>
    <property type="gene ID" value="MJ_1641"/>
</dbReference>
<dbReference type="KEGG" id="mja:MJ_1641"/>
<dbReference type="eggNOG" id="arCOG00318">
    <property type="taxonomic scope" value="Archaea"/>
</dbReference>
<dbReference type="HOGENOM" id="CLU_989064_0_0_2"/>
<dbReference type="InParanoid" id="Q59035"/>
<dbReference type="Proteomes" id="UP000000805">
    <property type="component" value="Chromosome"/>
</dbReference>
<dbReference type="GO" id="GO:0030643">
    <property type="term" value="P:intracellular phosphate ion homeostasis"/>
    <property type="evidence" value="ECO:0007669"/>
    <property type="project" value="InterPro"/>
</dbReference>
<dbReference type="GO" id="GO:0045936">
    <property type="term" value="P:negative regulation of phosphate metabolic process"/>
    <property type="evidence" value="ECO:0007669"/>
    <property type="project" value="InterPro"/>
</dbReference>
<dbReference type="Gene3D" id="1.10.10.60">
    <property type="entry name" value="Homeodomain-like"/>
    <property type="match status" value="1"/>
</dbReference>
<dbReference type="Gene3D" id="1.20.58.220">
    <property type="entry name" value="Phosphate transport system protein phou homolog 2, domain 2"/>
    <property type="match status" value="2"/>
</dbReference>
<dbReference type="InterPro" id="IPR028366">
    <property type="entry name" value="P_transport_PhoU"/>
</dbReference>
<dbReference type="InterPro" id="IPR038078">
    <property type="entry name" value="PhoU-like_sf"/>
</dbReference>
<dbReference type="InterPro" id="IPR026022">
    <property type="entry name" value="PhoU_dom"/>
</dbReference>
<dbReference type="InterPro" id="IPR036390">
    <property type="entry name" value="WH_DNA-bd_sf"/>
</dbReference>
<dbReference type="PANTHER" id="PTHR42930">
    <property type="entry name" value="PHOSPHATE-SPECIFIC TRANSPORT SYSTEM ACCESSORY PROTEIN PHOU"/>
    <property type="match status" value="1"/>
</dbReference>
<dbReference type="PANTHER" id="PTHR42930:SF3">
    <property type="entry name" value="PHOSPHATE-SPECIFIC TRANSPORT SYSTEM ACCESSORY PROTEIN PHOU"/>
    <property type="match status" value="1"/>
</dbReference>
<dbReference type="Pfam" id="PF13412">
    <property type="entry name" value="HTH_24"/>
    <property type="match status" value="1"/>
</dbReference>
<dbReference type="Pfam" id="PF01895">
    <property type="entry name" value="PhoU"/>
    <property type="match status" value="2"/>
</dbReference>
<dbReference type="SUPFAM" id="SSF109755">
    <property type="entry name" value="PhoU-like"/>
    <property type="match status" value="1"/>
</dbReference>
<dbReference type="SUPFAM" id="SSF46785">
    <property type="entry name" value="Winged helix' DNA-binding domain"/>
    <property type="match status" value="1"/>
</dbReference>
<reference key="1">
    <citation type="journal article" date="1996" name="Science">
        <title>Complete genome sequence of the methanogenic archaeon, Methanococcus jannaschii.</title>
        <authorList>
            <person name="Bult C.J."/>
            <person name="White O."/>
            <person name="Olsen G.J."/>
            <person name="Zhou L."/>
            <person name="Fleischmann R.D."/>
            <person name="Sutton G.G."/>
            <person name="Blake J.A."/>
            <person name="FitzGerald L.M."/>
            <person name="Clayton R.A."/>
            <person name="Gocayne J.D."/>
            <person name="Kerlavage A.R."/>
            <person name="Dougherty B.A."/>
            <person name="Tomb J.-F."/>
            <person name="Adams M.D."/>
            <person name="Reich C.I."/>
            <person name="Overbeek R."/>
            <person name="Kirkness E.F."/>
            <person name="Weinstock K.G."/>
            <person name="Merrick J.M."/>
            <person name="Glodek A."/>
            <person name="Scott J.L."/>
            <person name="Geoghagen N.S.M."/>
            <person name="Weidman J.F."/>
            <person name="Fuhrmann J.L."/>
            <person name="Nguyen D."/>
            <person name="Utterback T.R."/>
            <person name="Kelley J.M."/>
            <person name="Peterson J.D."/>
            <person name="Sadow P.W."/>
            <person name="Hanna M.C."/>
            <person name="Cotton M.D."/>
            <person name="Roberts K.M."/>
            <person name="Hurst M.A."/>
            <person name="Kaine B.P."/>
            <person name="Borodovsky M."/>
            <person name="Klenk H.-P."/>
            <person name="Fraser C.M."/>
            <person name="Smith H.O."/>
            <person name="Woese C.R."/>
            <person name="Venter J.C."/>
        </authorList>
    </citation>
    <scope>NUCLEOTIDE SEQUENCE [LARGE SCALE GENOMIC DNA]</scope>
    <source>
        <strain>ATCC 43067 / DSM 2661 / JAL-1 / JCM 10045 / NBRC 100440</strain>
    </source>
</reference>
<keyword id="KW-1185">Reference proteome</keyword>